<feature type="chain" id="PRO_0000115064" description="DNA mismatch repair protein MutS">
    <location>
        <begin position="1"/>
        <end position="855"/>
    </location>
</feature>
<feature type="binding site" evidence="2">
    <location>
        <begin position="607"/>
        <end position="614"/>
    </location>
    <ligand>
        <name>ATP</name>
        <dbReference type="ChEBI" id="CHEBI:30616"/>
    </ligand>
</feature>
<organism>
    <name type="scientific">Aquifex pyrophilus</name>
    <dbReference type="NCBI Taxonomy" id="2714"/>
    <lineage>
        <taxon>Bacteria</taxon>
        <taxon>Pseudomonadati</taxon>
        <taxon>Aquificota</taxon>
        <taxon>Aquificia</taxon>
        <taxon>Aquificales</taxon>
        <taxon>Aquificaceae</taxon>
        <taxon>Aquifex</taxon>
    </lineage>
</organism>
<proteinExistence type="inferred from homology"/>
<protein>
    <recommendedName>
        <fullName>DNA mismatch repair protein MutS</fullName>
    </recommendedName>
</protein>
<keyword id="KW-0067">ATP-binding</keyword>
<keyword id="KW-0227">DNA damage</keyword>
<keyword id="KW-0234">DNA repair</keyword>
<keyword id="KW-0238">DNA-binding</keyword>
<keyword id="KW-0547">Nucleotide-binding</keyword>
<dbReference type="EMBL" id="U71154">
    <property type="protein sequence ID" value="AAB16998.1"/>
    <property type="molecule type" value="Genomic_DNA"/>
</dbReference>
<dbReference type="SMR" id="P70755"/>
<dbReference type="GO" id="GO:0005829">
    <property type="term" value="C:cytosol"/>
    <property type="evidence" value="ECO:0007669"/>
    <property type="project" value="TreeGrafter"/>
</dbReference>
<dbReference type="GO" id="GO:0005524">
    <property type="term" value="F:ATP binding"/>
    <property type="evidence" value="ECO:0007669"/>
    <property type="project" value="UniProtKB-UniRule"/>
</dbReference>
<dbReference type="GO" id="GO:0140664">
    <property type="term" value="F:ATP-dependent DNA damage sensor activity"/>
    <property type="evidence" value="ECO:0007669"/>
    <property type="project" value="InterPro"/>
</dbReference>
<dbReference type="GO" id="GO:0003684">
    <property type="term" value="F:damaged DNA binding"/>
    <property type="evidence" value="ECO:0007669"/>
    <property type="project" value="UniProtKB-UniRule"/>
</dbReference>
<dbReference type="GO" id="GO:0030983">
    <property type="term" value="F:mismatched DNA binding"/>
    <property type="evidence" value="ECO:0007669"/>
    <property type="project" value="InterPro"/>
</dbReference>
<dbReference type="GO" id="GO:0006298">
    <property type="term" value="P:mismatch repair"/>
    <property type="evidence" value="ECO:0007669"/>
    <property type="project" value="UniProtKB-UniRule"/>
</dbReference>
<dbReference type="CDD" id="cd03284">
    <property type="entry name" value="ABC_MutS1"/>
    <property type="match status" value="1"/>
</dbReference>
<dbReference type="FunFam" id="3.40.1170.10:FF:000001">
    <property type="entry name" value="DNA mismatch repair protein MutS"/>
    <property type="match status" value="1"/>
</dbReference>
<dbReference type="FunFam" id="3.40.50.300:FF:000870">
    <property type="entry name" value="MutS protein homolog 4"/>
    <property type="match status" value="1"/>
</dbReference>
<dbReference type="Gene3D" id="1.10.1420.10">
    <property type="match status" value="2"/>
</dbReference>
<dbReference type="Gene3D" id="3.40.1170.10">
    <property type="entry name" value="DNA repair protein MutS, domain I"/>
    <property type="match status" value="1"/>
</dbReference>
<dbReference type="Gene3D" id="3.30.420.110">
    <property type="entry name" value="MutS, connector domain"/>
    <property type="match status" value="1"/>
</dbReference>
<dbReference type="Gene3D" id="3.40.50.300">
    <property type="entry name" value="P-loop containing nucleotide triphosphate hydrolases"/>
    <property type="match status" value="1"/>
</dbReference>
<dbReference type="HAMAP" id="MF_00096">
    <property type="entry name" value="MutS"/>
    <property type="match status" value="1"/>
</dbReference>
<dbReference type="InterPro" id="IPR005748">
    <property type="entry name" value="DNA_mismatch_repair_MutS"/>
</dbReference>
<dbReference type="InterPro" id="IPR007695">
    <property type="entry name" value="DNA_mismatch_repair_MutS-lik_N"/>
</dbReference>
<dbReference type="InterPro" id="IPR017261">
    <property type="entry name" value="DNA_mismatch_repair_MutS/MSH"/>
</dbReference>
<dbReference type="InterPro" id="IPR000432">
    <property type="entry name" value="DNA_mismatch_repair_MutS_C"/>
</dbReference>
<dbReference type="InterPro" id="IPR007861">
    <property type="entry name" value="DNA_mismatch_repair_MutS_clamp"/>
</dbReference>
<dbReference type="InterPro" id="IPR007696">
    <property type="entry name" value="DNA_mismatch_repair_MutS_core"/>
</dbReference>
<dbReference type="InterPro" id="IPR016151">
    <property type="entry name" value="DNA_mismatch_repair_MutS_N"/>
</dbReference>
<dbReference type="InterPro" id="IPR036187">
    <property type="entry name" value="DNA_mismatch_repair_MutS_sf"/>
</dbReference>
<dbReference type="InterPro" id="IPR007860">
    <property type="entry name" value="DNA_mmatch_repair_MutS_con_dom"/>
</dbReference>
<dbReference type="InterPro" id="IPR045076">
    <property type="entry name" value="MutS"/>
</dbReference>
<dbReference type="InterPro" id="IPR036678">
    <property type="entry name" value="MutS_con_dom_sf"/>
</dbReference>
<dbReference type="InterPro" id="IPR027417">
    <property type="entry name" value="P-loop_NTPase"/>
</dbReference>
<dbReference type="NCBIfam" id="TIGR01070">
    <property type="entry name" value="mutS1"/>
    <property type="match status" value="1"/>
</dbReference>
<dbReference type="NCBIfam" id="NF003810">
    <property type="entry name" value="PRK05399.1"/>
    <property type="match status" value="1"/>
</dbReference>
<dbReference type="PANTHER" id="PTHR11361:SF34">
    <property type="entry name" value="DNA MISMATCH REPAIR PROTEIN MSH1, MITOCHONDRIAL"/>
    <property type="match status" value="1"/>
</dbReference>
<dbReference type="PANTHER" id="PTHR11361">
    <property type="entry name" value="DNA MISMATCH REPAIR PROTEIN MUTS FAMILY MEMBER"/>
    <property type="match status" value="1"/>
</dbReference>
<dbReference type="Pfam" id="PF01624">
    <property type="entry name" value="MutS_I"/>
    <property type="match status" value="1"/>
</dbReference>
<dbReference type="Pfam" id="PF05188">
    <property type="entry name" value="MutS_II"/>
    <property type="match status" value="1"/>
</dbReference>
<dbReference type="Pfam" id="PF05192">
    <property type="entry name" value="MutS_III"/>
    <property type="match status" value="1"/>
</dbReference>
<dbReference type="Pfam" id="PF05190">
    <property type="entry name" value="MutS_IV"/>
    <property type="match status" value="1"/>
</dbReference>
<dbReference type="Pfam" id="PF00488">
    <property type="entry name" value="MutS_V"/>
    <property type="match status" value="1"/>
</dbReference>
<dbReference type="PIRSF" id="PIRSF037677">
    <property type="entry name" value="DNA_mis_repair_Msh6"/>
    <property type="match status" value="1"/>
</dbReference>
<dbReference type="SMART" id="SM00534">
    <property type="entry name" value="MUTSac"/>
    <property type="match status" value="1"/>
</dbReference>
<dbReference type="SMART" id="SM00533">
    <property type="entry name" value="MUTSd"/>
    <property type="match status" value="1"/>
</dbReference>
<dbReference type="SUPFAM" id="SSF55271">
    <property type="entry name" value="DNA repair protein MutS, domain I"/>
    <property type="match status" value="1"/>
</dbReference>
<dbReference type="SUPFAM" id="SSF53150">
    <property type="entry name" value="DNA repair protein MutS, domain II"/>
    <property type="match status" value="1"/>
</dbReference>
<dbReference type="SUPFAM" id="SSF48334">
    <property type="entry name" value="DNA repair protein MutS, domain III"/>
    <property type="match status" value="1"/>
</dbReference>
<dbReference type="SUPFAM" id="SSF52540">
    <property type="entry name" value="P-loop containing nucleoside triphosphate hydrolases"/>
    <property type="match status" value="1"/>
</dbReference>
<dbReference type="PROSITE" id="PS00486">
    <property type="entry name" value="DNA_MISMATCH_REPAIR_2"/>
    <property type="match status" value="1"/>
</dbReference>
<reference key="1">
    <citation type="submission" date="1996-10" db="EMBL/GenBank/DDBJ databases">
        <title>Hyperthermophilic MutS proteins: isolation, characterization and enhancement of PCR specificity.</title>
        <authorList>
            <person name="Wetmur J.G."/>
            <person name="Rosenfeld A."/>
            <person name="Wong D.M."/>
        </authorList>
    </citation>
    <scope>NUCLEOTIDE SEQUENCE [GENOMIC DNA]</scope>
</reference>
<evidence type="ECO:0000250" key="1"/>
<evidence type="ECO:0000255" key="2"/>
<evidence type="ECO:0000305" key="3"/>
<gene>
    <name type="primary">mutS</name>
</gene>
<accession>P70755</accession>
<name>MUTS_AQUPY</name>
<comment type="function">
    <text evidence="1">This protein is involved in the repair of mismatches in DNA. It is possible that it carries out the mismatch recognition step. This protein has a weak ATPase activity (By similarity).</text>
</comment>
<comment type="similarity">
    <text evidence="3">Belongs to the DNA mismatch repair MutS family.</text>
</comment>
<sequence length="855" mass="97656">MGKEEKELTPMLAQYHQFKSMYPDCLLLFRLGDFYELFYEDAVVGSKELGLVLTSRPAGKGRERIPMCGVPYHSANNYIAKLVNKGYKVAICEQVEDPSKAKGIVKRDVIRVITPGTFFERETGGLCSLYRKGKSYLVSYLNLSVGEFIGAKVKEEELIDFLSKFNIREVLVKKGEKLPEKLEKVLKLHITELEEEFFEEGKEELLKDYGVPSIKAFGFQDEDLSLSLGAVYRYAKATQKSFTPLIPKPKPYVDEGYVKLDLKAVKGLEITESIEGRKDLSLFKVVDRTLTGMGRRRLRFRLLNPFRSIERIRKVQEAVEELINKREVLNEIRKTLEGMSDLERLVSRISSNMASPRELIHLKNSLRKAEELRKILSLLDSEIFKEIEGSLLNLNKVADLIDKTLVDDPPLHVKEGGLIKPGVNAYLDELRFIRENAEKLLKEYEKKLKKETGIQSLKIGYNKVMGYYIEVTKANVKYVPEHFRRRQTLSNAERYTTEELQRLEEKILSAQTRINELEYELYRELREEVVKELDKVGNNATLIGEVDYIQSLAWLALEKGWVKPEVHEGYELIIEEGKHPVIEEFTKNYVPNDTKLTEEEFIHVITGPNMAGKSSYIRQVGVLTLLAHTGSFLPVKSARIPLVDAIFTRIGSGDVLALGVSTFMNEMLDVSNILNNATKRSLIILDEVGRGTSTYDGIAISKAIVKYISEKIGAKTLLATHYLELTELERKVKGVKNYHMEVEETDEGIRFLYILKEGRAKGSFGIDVAKLAGLPEEVVREAKKILKELEGEKGKQEVLPFLEETYKKSVDEEKLNFYEEIIKEIEEIDIGNTTPVKALLILAELKERIKSFIKR</sequence>